<sequence>MQQSGVPGSRGCALCPLLGVLFFQGVYVIFSLEIKADAHVRGYVGENIKLRCTFKSSSSITDKLTIDWTYRPPSSSRTESIFHYQSFQYPTTAGTFRDRISWVGDVYKGDASISISNPTMKDNGTFSCAVKNPPDVHHNIPATELTVTERGFGTMLSSVALLSILVFIPSTVVVILLLVRMGRKSAGLKKRSKSGYKKSSIEVSDDTDQEGDDCMAKLCVRCAECVDSDYEETY</sequence>
<dbReference type="EMBL" id="BC140504">
    <property type="protein sequence ID" value="AAI40505.1"/>
    <property type="molecule type" value="mRNA"/>
</dbReference>
<dbReference type="RefSeq" id="NP_001091520.1">
    <property type="nucleotide sequence ID" value="NM_001098051.1"/>
</dbReference>
<dbReference type="SMR" id="A5D7C3"/>
<dbReference type="FunCoup" id="A5D7C3">
    <property type="interactions" value="203"/>
</dbReference>
<dbReference type="STRING" id="9913.ENSBTAP00000001630"/>
<dbReference type="GlyCosmos" id="A5D7C3">
    <property type="glycosylation" value="1 site, No reported glycans"/>
</dbReference>
<dbReference type="GlyGen" id="A5D7C3">
    <property type="glycosylation" value="1 site"/>
</dbReference>
<dbReference type="PaxDb" id="9913-ENSBTAP00000001630"/>
<dbReference type="GeneID" id="521837"/>
<dbReference type="KEGG" id="bta:521837"/>
<dbReference type="CTD" id="196264"/>
<dbReference type="VEuPathDB" id="HostDB:ENSBTAG00000001233"/>
<dbReference type="eggNOG" id="ENOG502RYH4">
    <property type="taxonomic scope" value="Eukaryota"/>
</dbReference>
<dbReference type="InParanoid" id="A5D7C3"/>
<dbReference type="OMA" id="WCLNCVD"/>
<dbReference type="OrthoDB" id="8916449at2759"/>
<dbReference type="Proteomes" id="UP000009136">
    <property type="component" value="Chromosome 15"/>
</dbReference>
<dbReference type="Bgee" id="ENSBTAG00000001233">
    <property type="expression patterns" value="Expressed in rumen papilla and 105 other cell types or tissues"/>
</dbReference>
<dbReference type="GO" id="GO:0005886">
    <property type="term" value="C:plasma membrane"/>
    <property type="evidence" value="ECO:0000318"/>
    <property type="project" value="GO_Central"/>
</dbReference>
<dbReference type="GO" id="GO:0007155">
    <property type="term" value="P:cell adhesion"/>
    <property type="evidence" value="ECO:0007669"/>
    <property type="project" value="UniProtKB-KW"/>
</dbReference>
<dbReference type="FunFam" id="2.60.40.10:FF:000193">
    <property type="entry name" value="Myelin protein zero-like 1 like"/>
    <property type="match status" value="1"/>
</dbReference>
<dbReference type="Gene3D" id="2.60.40.10">
    <property type="entry name" value="Immunoglobulins"/>
    <property type="match status" value="1"/>
</dbReference>
<dbReference type="InterPro" id="IPR007110">
    <property type="entry name" value="Ig-like_dom"/>
</dbReference>
<dbReference type="InterPro" id="IPR036179">
    <property type="entry name" value="Ig-like_dom_sf"/>
</dbReference>
<dbReference type="InterPro" id="IPR013783">
    <property type="entry name" value="Ig-like_fold"/>
</dbReference>
<dbReference type="InterPro" id="IPR003599">
    <property type="entry name" value="Ig_sub"/>
</dbReference>
<dbReference type="InterPro" id="IPR013106">
    <property type="entry name" value="Ig_V-set"/>
</dbReference>
<dbReference type="InterPro" id="IPR000920">
    <property type="entry name" value="Myelin_P0-rel"/>
</dbReference>
<dbReference type="PANTHER" id="PTHR13869">
    <property type="entry name" value="MYELIN P0 RELATED"/>
    <property type="match status" value="1"/>
</dbReference>
<dbReference type="PANTHER" id="PTHR13869:SF20">
    <property type="entry name" value="MYELIN PROTEIN ZERO-LIKE PROTEIN 3"/>
    <property type="match status" value="1"/>
</dbReference>
<dbReference type="Pfam" id="PF07686">
    <property type="entry name" value="V-set"/>
    <property type="match status" value="1"/>
</dbReference>
<dbReference type="PRINTS" id="PR00213">
    <property type="entry name" value="MYELINP0"/>
</dbReference>
<dbReference type="SMART" id="SM00409">
    <property type="entry name" value="IG"/>
    <property type="match status" value="1"/>
</dbReference>
<dbReference type="SMART" id="SM00406">
    <property type="entry name" value="IGv"/>
    <property type="match status" value="1"/>
</dbReference>
<dbReference type="SUPFAM" id="SSF48726">
    <property type="entry name" value="Immunoglobulin"/>
    <property type="match status" value="1"/>
</dbReference>
<dbReference type="PROSITE" id="PS50835">
    <property type="entry name" value="IG_LIKE"/>
    <property type="match status" value="1"/>
</dbReference>
<proteinExistence type="evidence at transcript level"/>
<feature type="signal peptide" evidence="1">
    <location>
        <begin position="1"/>
        <end position="31"/>
    </location>
</feature>
<feature type="chain" id="PRO_0000312853" description="Myelin protein zero-like protein 3" evidence="1">
    <location>
        <begin position="32"/>
        <end position="234"/>
    </location>
</feature>
<feature type="topological domain" description="Extracellular" evidence="2">
    <location>
        <begin position="32"/>
        <end position="158"/>
    </location>
</feature>
<feature type="transmembrane region" description="Helical" evidence="2">
    <location>
        <begin position="159"/>
        <end position="179"/>
    </location>
</feature>
<feature type="topological domain" description="Cytoplasmic" evidence="2">
    <location>
        <begin position="180"/>
        <end position="234"/>
    </location>
</feature>
<feature type="domain" description="Ig-like V-type">
    <location>
        <begin position="32"/>
        <end position="148"/>
    </location>
</feature>
<feature type="glycosylation site" description="N-linked (GlcNAc...) asparagine" evidence="2">
    <location>
        <position position="123"/>
    </location>
</feature>
<feature type="disulfide bond" evidence="3">
    <location>
        <begin position="52"/>
        <end position="128"/>
    </location>
</feature>
<gene>
    <name type="primary">MPZL3</name>
</gene>
<evidence type="ECO:0000250" key="1"/>
<evidence type="ECO:0000255" key="2"/>
<evidence type="ECO:0000255" key="3">
    <source>
        <dbReference type="PROSITE-ProRule" id="PRU00114"/>
    </source>
</evidence>
<evidence type="ECO:0000305" key="4"/>
<reference key="1">
    <citation type="submission" date="2007-04" db="EMBL/GenBank/DDBJ databases">
        <authorList>
            <consortium name="NIH - Mammalian Gene Collection (MGC) project"/>
        </authorList>
    </citation>
    <scope>NUCLEOTIDE SEQUENCE [LARGE SCALE MRNA]</scope>
    <source>
        <strain>Hereford</strain>
        <tissue>Hippocampus</tissue>
    </source>
</reference>
<accession>A5D7C3</accession>
<keyword id="KW-0130">Cell adhesion</keyword>
<keyword id="KW-1015">Disulfide bond</keyword>
<keyword id="KW-0325">Glycoprotein</keyword>
<keyword id="KW-0393">Immunoglobulin domain</keyword>
<keyword id="KW-0472">Membrane</keyword>
<keyword id="KW-1185">Reference proteome</keyword>
<keyword id="KW-0732">Signal</keyword>
<keyword id="KW-0812">Transmembrane</keyword>
<keyword id="KW-1133">Transmembrane helix</keyword>
<name>MPZL3_BOVIN</name>
<comment type="function">
    <text evidence="1">Mediates homophilic cell-cell adhesion.</text>
</comment>
<comment type="subcellular location">
    <subcellularLocation>
        <location evidence="4">Membrane</location>
        <topology evidence="4">Single-pass type I membrane protein</topology>
    </subcellularLocation>
</comment>
<comment type="similarity">
    <text evidence="4">Belongs to the myelin P0 protein family.</text>
</comment>
<protein>
    <recommendedName>
        <fullName>Myelin protein zero-like protein 3</fullName>
    </recommendedName>
</protein>
<organism>
    <name type="scientific">Bos taurus</name>
    <name type="common">Bovine</name>
    <dbReference type="NCBI Taxonomy" id="9913"/>
    <lineage>
        <taxon>Eukaryota</taxon>
        <taxon>Metazoa</taxon>
        <taxon>Chordata</taxon>
        <taxon>Craniata</taxon>
        <taxon>Vertebrata</taxon>
        <taxon>Euteleostomi</taxon>
        <taxon>Mammalia</taxon>
        <taxon>Eutheria</taxon>
        <taxon>Laurasiatheria</taxon>
        <taxon>Artiodactyla</taxon>
        <taxon>Ruminantia</taxon>
        <taxon>Pecora</taxon>
        <taxon>Bovidae</taxon>
        <taxon>Bovinae</taxon>
        <taxon>Bos</taxon>
    </lineage>
</organism>